<evidence type="ECO:0000255" key="1">
    <source>
        <dbReference type="HAMAP-Rule" id="MF_00249"/>
    </source>
</evidence>
<feature type="chain" id="PRO_1000204523" description="ATP-dependent protease ATPase subunit HslU">
    <location>
        <begin position="1"/>
        <end position="465"/>
    </location>
</feature>
<feature type="binding site" evidence="1">
    <location>
        <position position="19"/>
    </location>
    <ligand>
        <name>ATP</name>
        <dbReference type="ChEBI" id="CHEBI:30616"/>
    </ligand>
</feature>
<feature type="binding site" evidence="1">
    <location>
        <begin position="61"/>
        <end position="66"/>
    </location>
    <ligand>
        <name>ATP</name>
        <dbReference type="ChEBI" id="CHEBI:30616"/>
    </ligand>
</feature>
<feature type="binding site" evidence="1">
    <location>
        <position position="277"/>
    </location>
    <ligand>
        <name>ATP</name>
        <dbReference type="ChEBI" id="CHEBI:30616"/>
    </ligand>
</feature>
<feature type="binding site" evidence="1">
    <location>
        <position position="343"/>
    </location>
    <ligand>
        <name>ATP</name>
        <dbReference type="ChEBI" id="CHEBI:30616"/>
    </ligand>
</feature>
<feature type="binding site" evidence="1">
    <location>
        <position position="415"/>
    </location>
    <ligand>
        <name>ATP</name>
        <dbReference type="ChEBI" id="CHEBI:30616"/>
    </ligand>
</feature>
<name>HSLU_GEOSW</name>
<comment type="function">
    <text evidence="1">ATPase subunit of a proteasome-like degradation complex; this subunit has chaperone activity. The binding of ATP and its subsequent hydrolysis by HslU are essential for unfolding of protein substrates subsequently hydrolyzed by HslV. HslU recognizes the N-terminal part of its protein substrates and unfolds these before they are guided to HslV for hydrolysis.</text>
</comment>
<comment type="subunit">
    <text evidence="1">A double ring-shaped homohexamer of HslV is capped on each side by a ring-shaped HslU homohexamer. The assembly of the HslU/HslV complex is dependent on binding of ATP.</text>
</comment>
<comment type="subcellular location">
    <subcellularLocation>
        <location evidence="1">Cytoplasm</location>
    </subcellularLocation>
</comment>
<comment type="similarity">
    <text evidence="1">Belongs to the ClpX chaperone family. HslU subfamily.</text>
</comment>
<reference key="1">
    <citation type="submission" date="2009-06" db="EMBL/GenBank/DDBJ databases">
        <title>Complete sequence of chromosome of Geopacillus sp. WCH70.</title>
        <authorList>
            <consortium name="US DOE Joint Genome Institute"/>
            <person name="Lucas S."/>
            <person name="Copeland A."/>
            <person name="Lapidus A."/>
            <person name="Glavina del Rio T."/>
            <person name="Dalin E."/>
            <person name="Tice H."/>
            <person name="Bruce D."/>
            <person name="Goodwin L."/>
            <person name="Pitluck S."/>
            <person name="Chertkov O."/>
            <person name="Brettin T."/>
            <person name="Detter J.C."/>
            <person name="Han C."/>
            <person name="Larimer F."/>
            <person name="Land M."/>
            <person name="Hauser L."/>
            <person name="Kyrpides N."/>
            <person name="Mikhailova N."/>
            <person name="Brumm P."/>
            <person name="Mead D.A."/>
            <person name="Richardson P."/>
        </authorList>
    </citation>
    <scope>NUCLEOTIDE SEQUENCE [LARGE SCALE GENOMIC DNA]</scope>
    <source>
        <strain>WCH70</strain>
    </source>
</reference>
<organism>
    <name type="scientific">Geobacillus sp. (strain WCH70)</name>
    <dbReference type="NCBI Taxonomy" id="471223"/>
    <lineage>
        <taxon>Bacteria</taxon>
        <taxon>Bacillati</taxon>
        <taxon>Bacillota</taxon>
        <taxon>Bacilli</taxon>
        <taxon>Bacillales</taxon>
        <taxon>Anoxybacillaceae</taxon>
        <taxon>Geobacillus</taxon>
    </lineage>
</organism>
<dbReference type="EMBL" id="CP001638">
    <property type="protein sequence ID" value="ACS23966.1"/>
    <property type="molecule type" value="Genomic_DNA"/>
</dbReference>
<dbReference type="SMR" id="C5D8V9"/>
<dbReference type="STRING" id="471223.GWCH70_1106"/>
<dbReference type="KEGG" id="gwc:GWCH70_1106"/>
<dbReference type="eggNOG" id="COG1220">
    <property type="taxonomic scope" value="Bacteria"/>
</dbReference>
<dbReference type="HOGENOM" id="CLU_033123_0_0_9"/>
<dbReference type="OrthoDB" id="9804062at2"/>
<dbReference type="GO" id="GO:0009376">
    <property type="term" value="C:HslUV protease complex"/>
    <property type="evidence" value="ECO:0007669"/>
    <property type="project" value="UniProtKB-UniRule"/>
</dbReference>
<dbReference type="GO" id="GO:0005524">
    <property type="term" value="F:ATP binding"/>
    <property type="evidence" value="ECO:0007669"/>
    <property type="project" value="UniProtKB-UniRule"/>
</dbReference>
<dbReference type="GO" id="GO:0016887">
    <property type="term" value="F:ATP hydrolysis activity"/>
    <property type="evidence" value="ECO:0007669"/>
    <property type="project" value="InterPro"/>
</dbReference>
<dbReference type="GO" id="GO:0008233">
    <property type="term" value="F:peptidase activity"/>
    <property type="evidence" value="ECO:0007669"/>
    <property type="project" value="InterPro"/>
</dbReference>
<dbReference type="GO" id="GO:0036402">
    <property type="term" value="F:proteasome-activating activity"/>
    <property type="evidence" value="ECO:0007669"/>
    <property type="project" value="UniProtKB-UniRule"/>
</dbReference>
<dbReference type="GO" id="GO:0043335">
    <property type="term" value="P:protein unfolding"/>
    <property type="evidence" value="ECO:0007669"/>
    <property type="project" value="UniProtKB-UniRule"/>
</dbReference>
<dbReference type="GO" id="GO:0051603">
    <property type="term" value="P:proteolysis involved in protein catabolic process"/>
    <property type="evidence" value="ECO:0007669"/>
    <property type="project" value="TreeGrafter"/>
</dbReference>
<dbReference type="CDD" id="cd19498">
    <property type="entry name" value="RecA-like_HslU"/>
    <property type="match status" value="1"/>
</dbReference>
<dbReference type="FunFam" id="3.40.50.300:FF:000213">
    <property type="entry name" value="ATP-dependent protease ATPase subunit HslU"/>
    <property type="match status" value="1"/>
</dbReference>
<dbReference type="FunFam" id="3.40.50.300:FF:000220">
    <property type="entry name" value="ATP-dependent protease ATPase subunit HslU"/>
    <property type="match status" value="1"/>
</dbReference>
<dbReference type="Gene3D" id="1.10.8.60">
    <property type="match status" value="1"/>
</dbReference>
<dbReference type="Gene3D" id="3.40.50.300">
    <property type="entry name" value="P-loop containing nucleotide triphosphate hydrolases"/>
    <property type="match status" value="2"/>
</dbReference>
<dbReference type="HAMAP" id="MF_00249">
    <property type="entry name" value="HslU"/>
    <property type="match status" value="1"/>
</dbReference>
<dbReference type="InterPro" id="IPR003593">
    <property type="entry name" value="AAA+_ATPase"/>
</dbReference>
<dbReference type="InterPro" id="IPR050052">
    <property type="entry name" value="ATP-dep_Clp_protease_ClpX"/>
</dbReference>
<dbReference type="InterPro" id="IPR003959">
    <property type="entry name" value="ATPase_AAA_core"/>
</dbReference>
<dbReference type="InterPro" id="IPR019489">
    <property type="entry name" value="Clp_ATPase_C"/>
</dbReference>
<dbReference type="InterPro" id="IPR004491">
    <property type="entry name" value="HslU"/>
</dbReference>
<dbReference type="InterPro" id="IPR027417">
    <property type="entry name" value="P-loop_NTPase"/>
</dbReference>
<dbReference type="NCBIfam" id="TIGR00390">
    <property type="entry name" value="hslU"/>
    <property type="match status" value="1"/>
</dbReference>
<dbReference type="NCBIfam" id="NF003544">
    <property type="entry name" value="PRK05201.1"/>
    <property type="match status" value="1"/>
</dbReference>
<dbReference type="PANTHER" id="PTHR48102">
    <property type="entry name" value="ATP-DEPENDENT CLP PROTEASE ATP-BINDING SUBUNIT CLPX-LIKE, MITOCHONDRIAL-RELATED"/>
    <property type="match status" value="1"/>
</dbReference>
<dbReference type="PANTHER" id="PTHR48102:SF3">
    <property type="entry name" value="ATP-DEPENDENT PROTEASE ATPASE SUBUNIT HSLU"/>
    <property type="match status" value="1"/>
</dbReference>
<dbReference type="Pfam" id="PF00004">
    <property type="entry name" value="AAA"/>
    <property type="match status" value="1"/>
</dbReference>
<dbReference type="Pfam" id="PF07724">
    <property type="entry name" value="AAA_2"/>
    <property type="match status" value="1"/>
</dbReference>
<dbReference type="Pfam" id="PF10431">
    <property type="entry name" value="ClpB_D2-small"/>
    <property type="match status" value="1"/>
</dbReference>
<dbReference type="SMART" id="SM00382">
    <property type="entry name" value="AAA"/>
    <property type="match status" value="1"/>
</dbReference>
<dbReference type="SMART" id="SM01086">
    <property type="entry name" value="ClpB_D2-small"/>
    <property type="match status" value="1"/>
</dbReference>
<dbReference type="SUPFAM" id="SSF52540">
    <property type="entry name" value="P-loop containing nucleoside triphosphate hydrolases"/>
    <property type="match status" value="1"/>
</dbReference>
<gene>
    <name evidence="1" type="primary">hslU</name>
    <name type="ordered locus">GWCH70_1106</name>
</gene>
<protein>
    <recommendedName>
        <fullName evidence="1">ATP-dependent protease ATPase subunit HslU</fullName>
    </recommendedName>
    <alternativeName>
        <fullName evidence="1">Unfoldase HslU</fullName>
    </alternativeName>
</protein>
<proteinExistence type="inferred from homology"/>
<keyword id="KW-0067">ATP-binding</keyword>
<keyword id="KW-0143">Chaperone</keyword>
<keyword id="KW-0963">Cytoplasm</keyword>
<keyword id="KW-0547">Nucleotide-binding</keyword>
<keyword id="KW-0346">Stress response</keyword>
<sequence>MSEALTPRQIVEKLDQFIVGQKEAKKAVAIALRNRYRRSLLDEKLRDEVVPKNILMIGPTGVGKTEIARRLAKLVGAPFVKVEATKFTEVGYVGRDVESMVRDLVETSVRLVKERKMNEVKDRAEQQANKRLVELLVPGKQKQTMKNPLELLFGGAQTSQQDTYQTYEDDHIEQKRRQVAWQLANGQLEDEMVTIEVEEQQPMFFDFLQGAGIEQMGMNMQDALSSLIPKRRKKRKLKVREARKVLTNEEAQKLIDMDEVTQEAIRLAEQSGIIFIDEIDKIARSGQAASSADVSREGVQRDILPIVEGSTVMTKYGPVKTDHILFIAAGAFHMAKPSDLIPELQGRFPIRVELTKLSVDDFVKILVEPDNALIKQYKALLATEGINLEFSDDAIRKIAEVAFEVNQTTDNIGARRLHTIMEKLLEDLLFEAPDITLDEVVITPQYVEQKLGNIVKNKDLSEFIL</sequence>
<accession>C5D8V9</accession>